<evidence type="ECO:0000255" key="1">
    <source>
        <dbReference type="HAMAP-Rule" id="MF_01722"/>
    </source>
</evidence>
<reference key="1">
    <citation type="journal article" date="2005" name="Science">
        <title>Life at depth: Photobacterium profundum genome sequence and expression analysis.</title>
        <authorList>
            <person name="Vezzi A."/>
            <person name="Campanaro S."/>
            <person name="D'Angelo M."/>
            <person name="Simonato F."/>
            <person name="Vitulo N."/>
            <person name="Lauro F.M."/>
            <person name="Cestaro A."/>
            <person name="Malacrida G."/>
            <person name="Simionati B."/>
            <person name="Cannata N."/>
            <person name="Romualdi C."/>
            <person name="Bartlett D.H."/>
            <person name="Valle G."/>
        </authorList>
    </citation>
    <scope>NUCLEOTIDE SEQUENCE [LARGE SCALE GENOMIC DNA]</scope>
    <source>
        <strain>ATCC BAA-1253 / SS9</strain>
    </source>
</reference>
<organism>
    <name type="scientific">Photobacterium profundum (strain SS9)</name>
    <dbReference type="NCBI Taxonomy" id="298386"/>
    <lineage>
        <taxon>Bacteria</taxon>
        <taxon>Pseudomonadati</taxon>
        <taxon>Pseudomonadota</taxon>
        <taxon>Gammaproteobacteria</taxon>
        <taxon>Vibrionales</taxon>
        <taxon>Vibrionaceae</taxon>
        <taxon>Photobacterium</taxon>
    </lineage>
</organism>
<protein>
    <recommendedName>
        <fullName evidence="1">Xylose import ATP-binding protein XylG</fullName>
        <ecNumber evidence="1">7.5.2.10</ecNumber>
    </recommendedName>
</protein>
<name>XYLG_PHOPR</name>
<accession>Q6LUY1</accession>
<keyword id="KW-0067">ATP-binding</keyword>
<keyword id="KW-0997">Cell inner membrane</keyword>
<keyword id="KW-1003">Cell membrane</keyword>
<keyword id="KW-0472">Membrane</keyword>
<keyword id="KW-0547">Nucleotide-binding</keyword>
<keyword id="KW-1185">Reference proteome</keyword>
<keyword id="KW-0677">Repeat</keyword>
<keyword id="KW-0762">Sugar transport</keyword>
<keyword id="KW-1278">Translocase</keyword>
<keyword id="KW-0813">Transport</keyword>
<gene>
    <name evidence="1" type="primary">xylG</name>
    <name type="ordered locus">PBPRA0463</name>
</gene>
<comment type="function">
    <text evidence="1">Part of the ABC transporter complex XylFGH involved in xylose import. Responsible for energy coupling to the transport system.</text>
</comment>
<comment type="catalytic activity">
    <reaction evidence="1">
        <text>D-xylose(out) + ATP + H2O = D-xylose(in) + ADP + phosphate + H(+)</text>
        <dbReference type="Rhea" id="RHEA:29899"/>
        <dbReference type="ChEBI" id="CHEBI:15377"/>
        <dbReference type="ChEBI" id="CHEBI:15378"/>
        <dbReference type="ChEBI" id="CHEBI:30616"/>
        <dbReference type="ChEBI" id="CHEBI:43474"/>
        <dbReference type="ChEBI" id="CHEBI:53455"/>
        <dbReference type="ChEBI" id="CHEBI:456216"/>
        <dbReference type="EC" id="7.5.2.10"/>
    </reaction>
</comment>
<comment type="subunit">
    <text evidence="1">The complex is composed of two ATP-binding proteins (XylG), two transmembrane proteins (XylH) and a solute-binding protein (XylF).</text>
</comment>
<comment type="subcellular location">
    <subcellularLocation>
        <location evidence="1">Cell inner membrane</location>
        <topology evidence="1">Peripheral membrane protein</topology>
    </subcellularLocation>
</comment>
<comment type="similarity">
    <text evidence="1">Belongs to the ABC transporter superfamily. Xylose importer (TC 3.A.1.2.4) family.</text>
</comment>
<proteinExistence type="inferred from homology"/>
<sequence>MVPLLKMTNIVKCFGTVKALDGVNIQLQQGEILSLCGENGSGKSTLMKVLCGIYPHGDFEGEIVFDGQVVEVKTIAETEALGIAIIHQELTLVKELSVLENLFLGAEIETFGVLDFDRMHAEAVKLLKKVKLDVPPDTRVGDLGVGQQQLIEIAKALSKNARLLVLDEPTAPLTESETDILLELVNDLREEGVSCIYISHKLNEVKAISDQICVIRDGQHIGTRDAKSMTTDDIITMMVGREMKQLFPREEHDIGDIVLEVKNISAWSKANSHIRKVDDVSFVLRKGEILGVSGLVGAGRTELMECLFGCYQGRYSGEVYLQGQKLTLQSCHDALDAGIAMVPEDRKRHGIIPIMSVGENITLASLTAFTQSGVLNDVKEASAISESIKALTVKTPNADLAIKHLSGGNQQKAILARFLLVNPTVLILDEPTRGIDVGAKYEIYKLMFQLVKQGISVIMVSSELPEVLGISDRVLVMHEGKIKGDLINDNLSQEQIMDCALSEKVTA</sequence>
<dbReference type="EC" id="7.5.2.10" evidence="1"/>
<dbReference type="EMBL" id="CR378664">
    <property type="protein sequence ID" value="CAG18894.1"/>
    <property type="molecule type" value="Genomic_DNA"/>
</dbReference>
<dbReference type="RefSeq" id="WP_011217250.1">
    <property type="nucleotide sequence ID" value="NC_006370.1"/>
</dbReference>
<dbReference type="SMR" id="Q6LUY1"/>
<dbReference type="STRING" id="298386.PBPRA0463"/>
<dbReference type="KEGG" id="ppr:PBPRA0463"/>
<dbReference type="eggNOG" id="COG1129">
    <property type="taxonomic scope" value="Bacteria"/>
</dbReference>
<dbReference type="HOGENOM" id="CLU_000604_92_3_6"/>
<dbReference type="Proteomes" id="UP000000593">
    <property type="component" value="Chromosome 1"/>
</dbReference>
<dbReference type="GO" id="GO:0005886">
    <property type="term" value="C:plasma membrane"/>
    <property type="evidence" value="ECO:0007669"/>
    <property type="project" value="UniProtKB-SubCell"/>
</dbReference>
<dbReference type="GO" id="GO:0015614">
    <property type="term" value="F:ABC-type D-xylose transporter activity"/>
    <property type="evidence" value="ECO:0007669"/>
    <property type="project" value="UniProtKB-EC"/>
</dbReference>
<dbReference type="GO" id="GO:0005524">
    <property type="term" value="F:ATP binding"/>
    <property type="evidence" value="ECO:0007669"/>
    <property type="project" value="UniProtKB-KW"/>
</dbReference>
<dbReference type="GO" id="GO:0016887">
    <property type="term" value="F:ATP hydrolysis activity"/>
    <property type="evidence" value="ECO:0007669"/>
    <property type="project" value="InterPro"/>
</dbReference>
<dbReference type="CDD" id="cd03216">
    <property type="entry name" value="ABC_Carb_Monos_I"/>
    <property type="match status" value="1"/>
</dbReference>
<dbReference type="CDD" id="cd03215">
    <property type="entry name" value="ABC_Carb_Monos_II"/>
    <property type="match status" value="1"/>
</dbReference>
<dbReference type="FunFam" id="3.40.50.300:FF:000126">
    <property type="entry name" value="Galactose/methyl galactoside import ATP-binding protein MglA"/>
    <property type="match status" value="1"/>
</dbReference>
<dbReference type="FunFam" id="3.40.50.300:FF:000127">
    <property type="entry name" value="Ribose import ATP-binding protein RbsA"/>
    <property type="match status" value="1"/>
</dbReference>
<dbReference type="Gene3D" id="3.40.50.300">
    <property type="entry name" value="P-loop containing nucleotide triphosphate hydrolases"/>
    <property type="match status" value="2"/>
</dbReference>
<dbReference type="InterPro" id="IPR003593">
    <property type="entry name" value="AAA+_ATPase"/>
</dbReference>
<dbReference type="InterPro" id="IPR050107">
    <property type="entry name" value="ABC_carbohydrate_import_ATPase"/>
</dbReference>
<dbReference type="InterPro" id="IPR003439">
    <property type="entry name" value="ABC_transporter-like_ATP-bd"/>
</dbReference>
<dbReference type="InterPro" id="IPR017871">
    <property type="entry name" value="ABC_transporter-like_CS"/>
</dbReference>
<dbReference type="InterPro" id="IPR013455">
    <property type="entry name" value="ABC_transptr_XylG"/>
</dbReference>
<dbReference type="InterPro" id="IPR027417">
    <property type="entry name" value="P-loop_NTPase"/>
</dbReference>
<dbReference type="NCBIfam" id="NF010069">
    <property type="entry name" value="PRK13549.1"/>
    <property type="match status" value="1"/>
</dbReference>
<dbReference type="NCBIfam" id="TIGR02633">
    <property type="entry name" value="xylG"/>
    <property type="match status" value="1"/>
</dbReference>
<dbReference type="PANTHER" id="PTHR43790">
    <property type="entry name" value="CARBOHYDRATE TRANSPORT ATP-BINDING PROTEIN MG119-RELATED"/>
    <property type="match status" value="1"/>
</dbReference>
<dbReference type="PANTHER" id="PTHR43790:SF1">
    <property type="entry name" value="XYLOSE IMPORT ATP-BINDING PROTEIN XYLG"/>
    <property type="match status" value="1"/>
</dbReference>
<dbReference type="Pfam" id="PF00005">
    <property type="entry name" value="ABC_tran"/>
    <property type="match status" value="2"/>
</dbReference>
<dbReference type="SMART" id="SM00382">
    <property type="entry name" value="AAA"/>
    <property type="match status" value="2"/>
</dbReference>
<dbReference type="SUPFAM" id="SSF52540">
    <property type="entry name" value="P-loop containing nucleoside triphosphate hydrolases"/>
    <property type="match status" value="2"/>
</dbReference>
<dbReference type="PROSITE" id="PS00211">
    <property type="entry name" value="ABC_TRANSPORTER_1"/>
    <property type="match status" value="1"/>
</dbReference>
<dbReference type="PROSITE" id="PS50893">
    <property type="entry name" value="ABC_TRANSPORTER_2"/>
    <property type="match status" value="2"/>
</dbReference>
<dbReference type="PROSITE" id="PS51280">
    <property type="entry name" value="XYLG"/>
    <property type="match status" value="1"/>
</dbReference>
<feature type="chain" id="PRO_0000271508" description="Xylose import ATP-binding protein XylG">
    <location>
        <begin position="1"/>
        <end position="507"/>
    </location>
</feature>
<feature type="domain" description="ABC transporter 1" evidence="1">
    <location>
        <begin position="5"/>
        <end position="242"/>
    </location>
</feature>
<feature type="domain" description="ABC transporter 2" evidence="1">
    <location>
        <begin position="259"/>
        <end position="504"/>
    </location>
</feature>
<feature type="binding site" evidence="1">
    <location>
        <begin position="37"/>
        <end position="44"/>
    </location>
    <ligand>
        <name>ATP</name>
        <dbReference type="ChEBI" id="CHEBI:30616"/>
    </ligand>
</feature>